<name>MK06_RAT</name>
<organism>
    <name type="scientific">Rattus norvegicus</name>
    <name type="common">Rat</name>
    <dbReference type="NCBI Taxonomy" id="10116"/>
    <lineage>
        <taxon>Eukaryota</taxon>
        <taxon>Metazoa</taxon>
        <taxon>Chordata</taxon>
        <taxon>Craniata</taxon>
        <taxon>Vertebrata</taxon>
        <taxon>Euteleostomi</taxon>
        <taxon>Mammalia</taxon>
        <taxon>Eutheria</taxon>
        <taxon>Euarchontoglires</taxon>
        <taxon>Glires</taxon>
        <taxon>Rodentia</taxon>
        <taxon>Myomorpha</taxon>
        <taxon>Muroidea</taxon>
        <taxon>Muridae</taxon>
        <taxon>Murinae</taxon>
        <taxon>Rattus</taxon>
    </lineage>
</organism>
<feature type="chain" id="PRO_0000186259" description="Mitogen-activated protein kinase 6">
    <location>
        <begin position="1"/>
        <end position="720"/>
    </location>
</feature>
<feature type="domain" description="Protein kinase" evidence="3">
    <location>
        <begin position="20"/>
        <end position="316"/>
    </location>
</feature>
<feature type="region of interest" description="Disordered" evidence="5">
    <location>
        <begin position="638"/>
        <end position="657"/>
    </location>
</feature>
<feature type="region of interest" description="Disordered" evidence="5">
    <location>
        <begin position="698"/>
        <end position="720"/>
    </location>
</feature>
<feature type="short sequence motif" description="SEG motif">
    <location>
        <begin position="189"/>
        <end position="191"/>
    </location>
</feature>
<feature type="short sequence motif" description="FRIEDE motif">
    <location>
        <begin position="332"/>
        <end position="337"/>
    </location>
</feature>
<feature type="compositionally biased region" description="Basic and acidic residues" evidence="5">
    <location>
        <begin position="647"/>
        <end position="657"/>
    </location>
</feature>
<feature type="compositionally biased region" description="Polar residues" evidence="5">
    <location>
        <begin position="698"/>
        <end position="714"/>
    </location>
</feature>
<feature type="active site" description="Proton acceptor" evidence="3 4">
    <location>
        <position position="152"/>
    </location>
</feature>
<feature type="binding site" evidence="3">
    <location>
        <begin position="26"/>
        <end position="34"/>
    </location>
    <ligand>
        <name>ATP</name>
        <dbReference type="ChEBI" id="CHEBI:30616"/>
    </ligand>
</feature>
<feature type="binding site" evidence="3">
    <location>
        <position position="49"/>
    </location>
    <ligand>
        <name>ATP</name>
        <dbReference type="ChEBI" id="CHEBI:30616"/>
    </ligand>
</feature>
<feature type="modified residue" description="Phosphoserine; by PAK1, PAK2 and PAK3" evidence="2">
    <location>
        <position position="189"/>
    </location>
</feature>
<feature type="modified residue" description="Phosphoserine" evidence="2">
    <location>
        <position position="386"/>
    </location>
</feature>
<feature type="modified residue" description="Phosphoserine" evidence="2">
    <location>
        <position position="452"/>
    </location>
</feature>
<feature type="modified residue" description="Phosphoserine" evidence="2">
    <location>
        <position position="554"/>
    </location>
</feature>
<feature type="modified residue" description="Phosphoserine" evidence="2">
    <location>
        <position position="556"/>
    </location>
</feature>
<feature type="modified residue" description="Phosphoserine" evidence="2">
    <location>
        <position position="683"/>
    </location>
</feature>
<feature type="cross-link" description="Peptide (Met-Gly) (interchain with G-Cter in ubiquitin)" evidence="1">
    <location>
        <position position="1"/>
    </location>
</feature>
<dbReference type="EC" id="2.7.11.24"/>
<dbReference type="EMBL" id="M64301">
    <property type="protein sequence ID" value="AAA41125.1"/>
    <property type="status" value="ALT_FRAME"/>
    <property type="molecule type" value="mRNA"/>
</dbReference>
<dbReference type="EMBL" id="BC109380">
    <property type="protein sequence ID" value="AAI09381.1"/>
    <property type="molecule type" value="mRNA"/>
</dbReference>
<dbReference type="PIR" id="B40033">
    <property type="entry name" value="B40033"/>
</dbReference>
<dbReference type="RefSeq" id="NP_113810.2">
    <property type="nucleotide sequence ID" value="NM_031622.2"/>
</dbReference>
<dbReference type="RefSeq" id="XP_006243471.1">
    <property type="nucleotide sequence ID" value="XM_006243409.5"/>
</dbReference>
<dbReference type="SMR" id="P27704"/>
<dbReference type="FunCoup" id="P27704">
    <property type="interactions" value="2781"/>
</dbReference>
<dbReference type="STRING" id="10116.ENSRNOP00000013053"/>
<dbReference type="iPTMnet" id="P27704"/>
<dbReference type="PhosphoSitePlus" id="P27704"/>
<dbReference type="PaxDb" id="10116-ENSRNOP00000013053"/>
<dbReference type="Ensembl" id="ENSRNOT00000013053.7">
    <property type="protein sequence ID" value="ENSRNOP00000013053.3"/>
    <property type="gene ID" value="ENSRNOG00000009381.7"/>
</dbReference>
<dbReference type="GeneID" id="58840"/>
<dbReference type="KEGG" id="rno:58840"/>
<dbReference type="UCSC" id="RGD:62087">
    <property type="organism name" value="rat"/>
</dbReference>
<dbReference type="AGR" id="RGD:62087"/>
<dbReference type="CTD" id="5597"/>
<dbReference type="RGD" id="62087">
    <property type="gene designation" value="Mapk6"/>
</dbReference>
<dbReference type="eggNOG" id="KOG0660">
    <property type="taxonomic scope" value="Eukaryota"/>
</dbReference>
<dbReference type="GeneTree" id="ENSGT00940000154351"/>
<dbReference type="InParanoid" id="P27704"/>
<dbReference type="OMA" id="EADWQLH"/>
<dbReference type="OrthoDB" id="8806754at2759"/>
<dbReference type="PhylomeDB" id="P27704"/>
<dbReference type="TreeFam" id="TF105098"/>
<dbReference type="BRENDA" id="2.7.11.24">
    <property type="organism ID" value="5301"/>
</dbReference>
<dbReference type="Reactome" id="R-RNO-5687128">
    <property type="pathway name" value="MAPK6/MAPK4 signaling"/>
</dbReference>
<dbReference type="PRO" id="PR:P27704"/>
<dbReference type="Proteomes" id="UP000002494">
    <property type="component" value="Chromosome 8"/>
</dbReference>
<dbReference type="Bgee" id="ENSRNOG00000009381">
    <property type="expression patterns" value="Expressed in testis and 19 other cell types or tissues"/>
</dbReference>
<dbReference type="ExpressionAtlas" id="P27704">
    <property type="expression patterns" value="baseline and differential"/>
</dbReference>
<dbReference type="GO" id="GO:0005737">
    <property type="term" value="C:cytoplasm"/>
    <property type="evidence" value="ECO:0000250"/>
    <property type="project" value="UniProtKB"/>
</dbReference>
<dbReference type="GO" id="GO:0005829">
    <property type="term" value="C:cytosol"/>
    <property type="evidence" value="ECO:0007669"/>
    <property type="project" value="Ensembl"/>
</dbReference>
<dbReference type="GO" id="GO:0005634">
    <property type="term" value="C:nucleus"/>
    <property type="evidence" value="ECO:0000250"/>
    <property type="project" value="UniProtKB"/>
</dbReference>
<dbReference type="GO" id="GO:0032991">
    <property type="term" value="C:protein-containing complex"/>
    <property type="evidence" value="ECO:0000266"/>
    <property type="project" value="RGD"/>
</dbReference>
<dbReference type="GO" id="GO:0032156">
    <property type="term" value="C:septin cytoskeleton"/>
    <property type="evidence" value="ECO:0000266"/>
    <property type="project" value="RGD"/>
</dbReference>
<dbReference type="GO" id="GO:0005524">
    <property type="term" value="F:ATP binding"/>
    <property type="evidence" value="ECO:0007669"/>
    <property type="project" value="UniProtKB-KW"/>
</dbReference>
<dbReference type="GO" id="GO:0004707">
    <property type="term" value="F:MAP kinase activity"/>
    <property type="evidence" value="ECO:0000250"/>
    <property type="project" value="UniProtKB"/>
</dbReference>
<dbReference type="GO" id="GO:0046982">
    <property type="term" value="F:protein heterodimerization activity"/>
    <property type="evidence" value="ECO:0000266"/>
    <property type="project" value="RGD"/>
</dbReference>
<dbReference type="GO" id="GO:0004672">
    <property type="term" value="F:protein kinase activity"/>
    <property type="evidence" value="ECO:0000266"/>
    <property type="project" value="RGD"/>
</dbReference>
<dbReference type="GO" id="GO:0019901">
    <property type="term" value="F:protein kinase binding"/>
    <property type="evidence" value="ECO:0000266"/>
    <property type="project" value="RGD"/>
</dbReference>
<dbReference type="GO" id="GO:0106310">
    <property type="term" value="F:protein serine kinase activity"/>
    <property type="evidence" value="ECO:0007669"/>
    <property type="project" value="RHEA"/>
</dbReference>
<dbReference type="GO" id="GO:0004674">
    <property type="term" value="F:protein serine/threonine kinase activity"/>
    <property type="evidence" value="ECO:0000318"/>
    <property type="project" value="GO_Central"/>
</dbReference>
<dbReference type="GO" id="GO:0035556">
    <property type="term" value="P:intracellular signal transduction"/>
    <property type="evidence" value="ECO:0000318"/>
    <property type="project" value="GO_Central"/>
</dbReference>
<dbReference type="GO" id="GO:0060999">
    <property type="term" value="P:positive regulation of dendritic spine development"/>
    <property type="evidence" value="ECO:0000266"/>
    <property type="project" value="RGD"/>
</dbReference>
<dbReference type="GO" id="GO:0006468">
    <property type="term" value="P:protein phosphorylation"/>
    <property type="evidence" value="ECO:0000250"/>
    <property type="project" value="UniProtKB"/>
</dbReference>
<dbReference type="CDD" id="cd07854">
    <property type="entry name" value="STKc_MAPK4_6"/>
    <property type="match status" value="1"/>
</dbReference>
<dbReference type="FunFam" id="3.30.200.20:FF:000223">
    <property type="entry name" value="Mitogen-activated protein kinase 6"/>
    <property type="match status" value="1"/>
</dbReference>
<dbReference type="FunFam" id="1.10.510.10:FF:000136">
    <property type="entry name" value="mitogen-activated protein kinase 6"/>
    <property type="match status" value="1"/>
</dbReference>
<dbReference type="Gene3D" id="3.30.200.20">
    <property type="entry name" value="Phosphorylase Kinase, domain 1"/>
    <property type="match status" value="1"/>
</dbReference>
<dbReference type="Gene3D" id="1.10.510.10">
    <property type="entry name" value="Transferase(Phosphotransferase) domain 1"/>
    <property type="match status" value="1"/>
</dbReference>
<dbReference type="InterPro" id="IPR011009">
    <property type="entry name" value="Kinase-like_dom_sf"/>
</dbReference>
<dbReference type="InterPro" id="IPR050117">
    <property type="entry name" value="MAP_kinase"/>
</dbReference>
<dbReference type="InterPro" id="IPR008350">
    <property type="entry name" value="MAPK_ERK3/4"/>
</dbReference>
<dbReference type="InterPro" id="IPR000719">
    <property type="entry name" value="Prot_kinase_dom"/>
</dbReference>
<dbReference type="InterPro" id="IPR017441">
    <property type="entry name" value="Protein_kinase_ATP_BS"/>
</dbReference>
<dbReference type="InterPro" id="IPR008271">
    <property type="entry name" value="Ser/Thr_kinase_AS"/>
</dbReference>
<dbReference type="PANTHER" id="PTHR24055">
    <property type="entry name" value="MITOGEN-ACTIVATED PROTEIN KINASE"/>
    <property type="match status" value="1"/>
</dbReference>
<dbReference type="Pfam" id="PF00069">
    <property type="entry name" value="Pkinase"/>
    <property type="match status" value="1"/>
</dbReference>
<dbReference type="PRINTS" id="PR01771">
    <property type="entry name" value="ERK3ERK4MAPK"/>
</dbReference>
<dbReference type="SMART" id="SM00220">
    <property type="entry name" value="S_TKc"/>
    <property type="match status" value="1"/>
</dbReference>
<dbReference type="SUPFAM" id="SSF56112">
    <property type="entry name" value="Protein kinase-like (PK-like)"/>
    <property type="match status" value="1"/>
</dbReference>
<dbReference type="PROSITE" id="PS00107">
    <property type="entry name" value="PROTEIN_KINASE_ATP"/>
    <property type="match status" value="1"/>
</dbReference>
<dbReference type="PROSITE" id="PS50011">
    <property type="entry name" value="PROTEIN_KINASE_DOM"/>
    <property type="match status" value="1"/>
</dbReference>
<dbReference type="PROSITE" id="PS00108">
    <property type="entry name" value="PROTEIN_KINASE_ST"/>
    <property type="match status" value="1"/>
</dbReference>
<sequence length="720" mass="82275">MAEKFESLMNIHGFDLGSRYMDLKPLGCGGNGLVFSAVDNDCDKRVAIKKIVLTDPQSVKHALREIKIIRRLDHDNIVKVFEILGPSGSQLTDDVGSLTELNSVYIVQEYMETDLANVLEQGPLLEEHARLFMYQLLRGLKYIHSANVLHRDLKPANLFINTEDLVLKIGDFGLARIMDPHYSHKGHLSEGLVTKWYRSPRLLLSPNNYTKAIDMWAAGCIFAEMLTGKTLFAGAHELEQMQLILESIPVVHEEDRQELLSVIPVYIRNDMTEPHKPLTQLLPGISREALDFLEQILTFSPMDRLTAEEALSHPYMSIYSFPTDEPISSHPFHIEDEVDDILLMDETHSHIYNWERYHDCQFSEHDWPIHNNFDIDEVQLDPRALSDVTDEEEVQVDPRKYLDGDREKYLEDPAFDTSYSAEPCWQYPDHHENKYCDLECSHTCNYKTRSPSYLDNLVWRESEVNHYYEPKLIIDLSNWKEQSKDKSDKRGKSKCERNGLVKAQIALEEASQQLAERERGQGFDFDAFIAGTVQLSAQRESADVVDKLNDLNSSVSQLEMKSLISKSVSREKQEKGRANLAQLGALYQPSWESQFVSGGEECFLISQFCCEVRKDEHVEKENTYTSYLDKFFSRKEDSEMLETEPVEEGKRGERGREAGLLSSGGEFLLSRQLESIGTPQFHSPGGSPLKSIQATLTPSAMKSSPQIPHKTYSNILKHLN</sequence>
<keyword id="KW-0067">ATP-binding</keyword>
<keyword id="KW-0131">Cell cycle</keyword>
<keyword id="KW-0963">Cytoplasm</keyword>
<keyword id="KW-0418">Kinase</keyword>
<keyword id="KW-0547">Nucleotide-binding</keyword>
<keyword id="KW-0539">Nucleus</keyword>
<keyword id="KW-0597">Phosphoprotein</keyword>
<keyword id="KW-1185">Reference proteome</keyword>
<keyword id="KW-0723">Serine/threonine-protein kinase</keyword>
<keyword id="KW-0808">Transferase</keyword>
<keyword id="KW-0832">Ubl conjugation</keyword>
<protein>
    <recommendedName>
        <fullName>Mitogen-activated protein kinase 6</fullName>
        <shortName>MAP kinase 6</shortName>
        <shortName>MAPK 6</shortName>
        <ecNumber>2.7.11.24</ecNumber>
    </recommendedName>
    <alternativeName>
        <fullName>Extracellular signal-regulated kinase 3</fullName>
        <shortName>ERK-3</shortName>
    </alternativeName>
    <alternativeName>
        <fullName>p55-MAPK</fullName>
    </alternativeName>
</protein>
<gene>
    <name type="primary">Mapk6</name>
    <name type="synonym">Erk3</name>
    <name type="synonym">Prkm6</name>
</gene>
<accession>P27704</accession>
<accession>Q32LY4</accession>
<evidence type="ECO:0000250" key="1"/>
<evidence type="ECO:0000250" key="2">
    <source>
        <dbReference type="UniProtKB" id="Q16659"/>
    </source>
</evidence>
<evidence type="ECO:0000255" key="3">
    <source>
        <dbReference type="PROSITE-ProRule" id="PRU00159"/>
    </source>
</evidence>
<evidence type="ECO:0000255" key="4">
    <source>
        <dbReference type="PROSITE-ProRule" id="PRU10027"/>
    </source>
</evidence>
<evidence type="ECO:0000256" key="5">
    <source>
        <dbReference type="SAM" id="MobiDB-lite"/>
    </source>
</evidence>
<evidence type="ECO:0000305" key="6"/>
<reference key="1">
    <citation type="journal article" date="1991" name="Cell">
        <title>ERKs: a family of protein-serine/threonine kinases that are activated and tyrosine phosphorylated in response to insulin and NGF.</title>
        <authorList>
            <person name="Boulton T.G."/>
            <person name="Nye S.H."/>
            <person name="Robbins D.J."/>
            <person name="Ip N.Y."/>
            <person name="Radziejewska E."/>
            <person name="Morgenbesser S.D."/>
            <person name="DePinho R.A."/>
            <person name="Panayotatos N."/>
            <person name="Cobb M.H."/>
            <person name="Yancopoulos G.D."/>
        </authorList>
    </citation>
    <scope>NUCLEOTIDE SEQUENCE [MRNA]</scope>
    <source>
        <strain>Sprague-Dawley</strain>
        <tissue>Brain</tissue>
        <tissue>Liver</tissue>
    </source>
</reference>
<reference key="2">
    <citation type="journal article" date="2004" name="Genome Res.">
        <title>The status, quality, and expansion of the NIH full-length cDNA project: the Mammalian Gene Collection (MGC).</title>
        <authorList>
            <consortium name="The MGC Project Team"/>
        </authorList>
    </citation>
    <scope>NUCLEOTIDE SEQUENCE [LARGE SCALE MRNA]</scope>
    <source>
        <tissue>Placenta</tissue>
    </source>
</reference>
<comment type="function">
    <text evidence="1">Atypical MAPK protein. Phosphorylates microtubule-associated protein 2 (MAP2) and MAPKAPK5. The precise role of the complex formed with MAPKAPK5 is still unclear, but the complex follows a complex set of phosphorylation events: upon interaction with atypical MAPKAPK5, ERK3/MAPK6 is phosphorylated at Ser-189 and then mediates phosphorylation and activation of MAPKAPK5, which in turn phosphorylates ERK3/MAPK6. May promote entry in the cell cycle (By similarity).</text>
</comment>
<comment type="catalytic activity">
    <reaction>
        <text>L-seryl-[protein] + ATP = O-phospho-L-seryl-[protein] + ADP + H(+)</text>
        <dbReference type="Rhea" id="RHEA:17989"/>
        <dbReference type="Rhea" id="RHEA-COMP:9863"/>
        <dbReference type="Rhea" id="RHEA-COMP:11604"/>
        <dbReference type="ChEBI" id="CHEBI:15378"/>
        <dbReference type="ChEBI" id="CHEBI:29999"/>
        <dbReference type="ChEBI" id="CHEBI:30616"/>
        <dbReference type="ChEBI" id="CHEBI:83421"/>
        <dbReference type="ChEBI" id="CHEBI:456216"/>
        <dbReference type="EC" id="2.7.11.24"/>
    </reaction>
</comment>
<comment type="catalytic activity">
    <reaction>
        <text>L-threonyl-[protein] + ATP = O-phospho-L-threonyl-[protein] + ADP + H(+)</text>
        <dbReference type="Rhea" id="RHEA:46608"/>
        <dbReference type="Rhea" id="RHEA-COMP:11060"/>
        <dbReference type="Rhea" id="RHEA-COMP:11605"/>
        <dbReference type="ChEBI" id="CHEBI:15378"/>
        <dbReference type="ChEBI" id="CHEBI:30013"/>
        <dbReference type="ChEBI" id="CHEBI:30616"/>
        <dbReference type="ChEBI" id="CHEBI:61977"/>
        <dbReference type="ChEBI" id="CHEBI:456216"/>
        <dbReference type="EC" id="2.7.11.24"/>
    </reaction>
</comment>
<comment type="cofactor">
    <cofactor evidence="1">
        <name>Mg(2+)</name>
        <dbReference type="ChEBI" id="CHEBI:18420"/>
    </cofactor>
</comment>
<comment type="activity regulation">
    <text evidence="1">Activated by phosphorylation at Ser-189.</text>
</comment>
<comment type="subunit">
    <text evidence="1">Heterodimer with ERK4/MAPK4. Interacts with (via FRIEDE motif) MAPKAPK5 (By similarity). Interacts with UBE3A; this interaction may be indirect and mediated by HERC2, possibly via HERC2 interaction with NEURL4 (By similarity).</text>
</comment>
<comment type="subcellular location">
    <subcellularLocation>
        <location evidence="1">Cytoplasm</location>
    </subcellularLocation>
    <subcellularLocation>
        <location evidence="1">Nucleus</location>
    </subcellularLocation>
    <text evidence="1">Translocates to the cytoplasm following interaction with MAPKAPK5.</text>
</comment>
<comment type="tissue specificity">
    <text>Highest levels within the nervous system, expressed in different tissues, mostly in skeletal muscle.</text>
</comment>
<comment type="developmental stage">
    <text>Expressed at highest levels early in development.</text>
</comment>
<comment type="domain">
    <text evidence="1">In contrast to classical MAPKs, the TXY motif within the activation loop is replaced by the SEG motif, whose phosphorylation activates the MAP kinases.</text>
</comment>
<comment type="PTM">
    <text evidence="1">Phosphorylated at Ser-189 by PAK1, PAK2 and PAK3 resulting in catalytic activation. Phosphorylated by MAPKAPK5 at other sites (By similarity).</text>
</comment>
<comment type="PTM">
    <text evidence="1">Ubiquitination at Met-1 leads to degradation by the proteasome pathway.</text>
</comment>
<comment type="similarity">
    <text evidence="6">Belongs to the protein kinase superfamily. CMGC Ser/Thr protein kinase family. MAP kinase subfamily.</text>
</comment>
<comment type="sequence caution" evidence="6">
    <conflict type="frameshift">
        <sequence resource="EMBL-CDS" id="AAA41125"/>
    </conflict>
</comment>
<proteinExistence type="evidence at transcript level"/>